<proteinExistence type="inferred from homology"/>
<reference key="1">
    <citation type="journal article" date="2009" name="PLoS Pathog.">
        <title>Molecular evolutionary consequences of niche restriction in Francisella tularensis, a facultative intracellular pathogen.</title>
        <authorList>
            <person name="Larsson P."/>
            <person name="Elfsmark D."/>
            <person name="Svensson K."/>
            <person name="Wikstroem P."/>
            <person name="Forsman M."/>
            <person name="Brettin T."/>
            <person name="Keim P."/>
            <person name="Johansson A."/>
        </authorList>
    </citation>
    <scope>NUCLEOTIDE SEQUENCE [LARGE SCALE GENOMIC DNA]</scope>
    <source>
        <strain>FSC147</strain>
    </source>
</reference>
<name>COAD_FRATM</name>
<evidence type="ECO:0000255" key="1">
    <source>
        <dbReference type="HAMAP-Rule" id="MF_00151"/>
    </source>
</evidence>
<dbReference type="EC" id="2.7.7.3" evidence="1"/>
<dbReference type="EMBL" id="CP000915">
    <property type="protein sequence ID" value="ACD31120.1"/>
    <property type="molecule type" value="Genomic_DNA"/>
</dbReference>
<dbReference type="SMR" id="B2SHB2"/>
<dbReference type="KEGG" id="ftm:FTM_1263"/>
<dbReference type="HOGENOM" id="CLU_100149_0_1_6"/>
<dbReference type="UniPathway" id="UPA00241">
    <property type="reaction ID" value="UER00355"/>
</dbReference>
<dbReference type="GO" id="GO:0005737">
    <property type="term" value="C:cytoplasm"/>
    <property type="evidence" value="ECO:0007669"/>
    <property type="project" value="UniProtKB-SubCell"/>
</dbReference>
<dbReference type="GO" id="GO:0005524">
    <property type="term" value="F:ATP binding"/>
    <property type="evidence" value="ECO:0007669"/>
    <property type="project" value="UniProtKB-KW"/>
</dbReference>
<dbReference type="GO" id="GO:0004595">
    <property type="term" value="F:pantetheine-phosphate adenylyltransferase activity"/>
    <property type="evidence" value="ECO:0007669"/>
    <property type="project" value="UniProtKB-UniRule"/>
</dbReference>
<dbReference type="GO" id="GO:0015937">
    <property type="term" value="P:coenzyme A biosynthetic process"/>
    <property type="evidence" value="ECO:0007669"/>
    <property type="project" value="UniProtKB-UniRule"/>
</dbReference>
<dbReference type="CDD" id="cd02163">
    <property type="entry name" value="PPAT"/>
    <property type="match status" value="1"/>
</dbReference>
<dbReference type="Gene3D" id="3.40.50.620">
    <property type="entry name" value="HUPs"/>
    <property type="match status" value="1"/>
</dbReference>
<dbReference type="HAMAP" id="MF_00151">
    <property type="entry name" value="PPAT_bact"/>
    <property type="match status" value="1"/>
</dbReference>
<dbReference type="InterPro" id="IPR004821">
    <property type="entry name" value="Cyt_trans-like"/>
</dbReference>
<dbReference type="InterPro" id="IPR001980">
    <property type="entry name" value="PPAT"/>
</dbReference>
<dbReference type="InterPro" id="IPR014729">
    <property type="entry name" value="Rossmann-like_a/b/a_fold"/>
</dbReference>
<dbReference type="NCBIfam" id="TIGR01510">
    <property type="entry name" value="coaD_prev_kdtB"/>
    <property type="match status" value="1"/>
</dbReference>
<dbReference type="NCBIfam" id="TIGR00125">
    <property type="entry name" value="cyt_tran_rel"/>
    <property type="match status" value="1"/>
</dbReference>
<dbReference type="PANTHER" id="PTHR21342">
    <property type="entry name" value="PHOSPHOPANTETHEINE ADENYLYLTRANSFERASE"/>
    <property type="match status" value="1"/>
</dbReference>
<dbReference type="PANTHER" id="PTHR21342:SF1">
    <property type="entry name" value="PHOSPHOPANTETHEINE ADENYLYLTRANSFERASE"/>
    <property type="match status" value="1"/>
</dbReference>
<dbReference type="Pfam" id="PF01467">
    <property type="entry name" value="CTP_transf_like"/>
    <property type="match status" value="1"/>
</dbReference>
<dbReference type="PRINTS" id="PR01020">
    <property type="entry name" value="LPSBIOSNTHSS"/>
</dbReference>
<dbReference type="SUPFAM" id="SSF52374">
    <property type="entry name" value="Nucleotidylyl transferase"/>
    <property type="match status" value="1"/>
</dbReference>
<gene>
    <name evidence="1" type="primary">coaD</name>
    <name type="ordered locus">FTM_1263</name>
</gene>
<sequence>MNKIAIYPGTFDPITNGHVDLVERALNIFDEIVVAVSTAYGKNTLFDIRIREQMIKEVFKDNQRVKVVSFQGLLVDTAVKHNACAIVRGLRAVSDFDYEFQMSSVNNKLNSDIQTIFLTPSEKFSCISSTLVRAVAIHNYKRVDEFVPECVFREIKLKYSKE</sequence>
<keyword id="KW-0067">ATP-binding</keyword>
<keyword id="KW-0173">Coenzyme A biosynthesis</keyword>
<keyword id="KW-0963">Cytoplasm</keyword>
<keyword id="KW-0460">Magnesium</keyword>
<keyword id="KW-0547">Nucleotide-binding</keyword>
<keyword id="KW-0548">Nucleotidyltransferase</keyword>
<keyword id="KW-0808">Transferase</keyword>
<accession>B2SHB2</accession>
<protein>
    <recommendedName>
        <fullName evidence="1">Phosphopantetheine adenylyltransferase</fullName>
        <ecNumber evidence="1">2.7.7.3</ecNumber>
    </recommendedName>
    <alternativeName>
        <fullName evidence="1">Dephospho-CoA pyrophosphorylase</fullName>
    </alternativeName>
    <alternativeName>
        <fullName evidence="1">Pantetheine-phosphate adenylyltransferase</fullName>
        <shortName evidence="1">PPAT</shortName>
    </alternativeName>
</protein>
<organism>
    <name type="scientific">Francisella tularensis subsp. mediasiatica (strain FSC147)</name>
    <dbReference type="NCBI Taxonomy" id="441952"/>
    <lineage>
        <taxon>Bacteria</taxon>
        <taxon>Pseudomonadati</taxon>
        <taxon>Pseudomonadota</taxon>
        <taxon>Gammaproteobacteria</taxon>
        <taxon>Thiotrichales</taxon>
        <taxon>Francisellaceae</taxon>
        <taxon>Francisella</taxon>
    </lineage>
</organism>
<comment type="function">
    <text evidence="1">Reversibly transfers an adenylyl group from ATP to 4'-phosphopantetheine, yielding dephospho-CoA (dPCoA) and pyrophosphate.</text>
</comment>
<comment type="catalytic activity">
    <reaction evidence="1">
        <text>(R)-4'-phosphopantetheine + ATP + H(+) = 3'-dephospho-CoA + diphosphate</text>
        <dbReference type="Rhea" id="RHEA:19801"/>
        <dbReference type="ChEBI" id="CHEBI:15378"/>
        <dbReference type="ChEBI" id="CHEBI:30616"/>
        <dbReference type="ChEBI" id="CHEBI:33019"/>
        <dbReference type="ChEBI" id="CHEBI:57328"/>
        <dbReference type="ChEBI" id="CHEBI:61723"/>
        <dbReference type="EC" id="2.7.7.3"/>
    </reaction>
</comment>
<comment type="cofactor">
    <cofactor evidence="1">
        <name>Mg(2+)</name>
        <dbReference type="ChEBI" id="CHEBI:18420"/>
    </cofactor>
</comment>
<comment type="pathway">
    <text evidence="1">Cofactor biosynthesis; coenzyme A biosynthesis; CoA from (R)-pantothenate: step 4/5.</text>
</comment>
<comment type="subunit">
    <text evidence="1">Homohexamer.</text>
</comment>
<comment type="subcellular location">
    <subcellularLocation>
        <location evidence="1">Cytoplasm</location>
    </subcellularLocation>
</comment>
<comment type="similarity">
    <text evidence="1">Belongs to the bacterial CoaD family.</text>
</comment>
<feature type="chain" id="PRO_1000096796" description="Phosphopantetheine adenylyltransferase">
    <location>
        <begin position="1"/>
        <end position="162"/>
    </location>
</feature>
<feature type="binding site" evidence="1">
    <location>
        <begin position="10"/>
        <end position="11"/>
    </location>
    <ligand>
        <name>ATP</name>
        <dbReference type="ChEBI" id="CHEBI:30616"/>
    </ligand>
</feature>
<feature type="binding site" evidence="1">
    <location>
        <position position="10"/>
    </location>
    <ligand>
        <name>substrate</name>
    </ligand>
</feature>
<feature type="binding site" evidence="1">
    <location>
        <position position="18"/>
    </location>
    <ligand>
        <name>ATP</name>
        <dbReference type="ChEBI" id="CHEBI:30616"/>
    </ligand>
</feature>
<feature type="binding site" evidence="1">
    <location>
        <position position="42"/>
    </location>
    <ligand>
        <name>substrate</name>
    </ligand>
</feature>
<feature type="binding site" evidence="1">
    <location>
        <position position="74"/>
    </location>
    <ligand>
        <name>substrate</name>
    </ligand>
</feature>
<feature type="binding site" evidence="1">
    <location>
        <position position="88"/>
    </location>
    <ligand>
        <name>substrate</name>
    </ligand>
</feature>
<feature type="binding site" evidence="1">
    <location>
        <begin position="89"/>
        <end position="91"/>
    </location>
    <ligand>
        <name>ATP</name>
        <dbReference type="ChEBI" id="CHEBI:30616"/>
    </ligand>
</feature>
<feature type="binding site" evidence="1">
    <location>
        <position position="99"/>
    </location>
    <ligand>
        <name>ATP</name>
        <dbReference type="ChEBI" id="CHEBI:30616"/>
    </ligand>
</feature>
<feature type="binding site" evidence="1">
    <location>
        <begin position="124"/>
        <end position="130"/>
    </location>
    <ligand>
        <name>ATP</name>
        <dbReference type="ChEBI" id="CHEBI:30616"/>
    </ligand>
</feature>
<feature type="site" description="Transition state stabilizer" evidence="1">
    <location>
        <position position="18"/>
    </location>
</feature>